<name>TDH_SHEB9</name>
<proteinExistence type="inferred from homology"/>
<keyword id="KW-0963">Cytoplasm</keyword>
<keyword id="KW-0479">Metal-binding</keyword>
<keyword id="KW-0520">NAD</keyword>
<keyword id="KW-0560">Oxidoreductase</keyword>
<keyword id="KW-0862">Zinc</keyword>
<organism>
    <name type="scientific">Shewanella baltica (strain OS195)</name>
    <dbReference type="NCBI Taxonomy" id="399599"/>
    <lineage>
        <taxon>Bacteria</taxon>
        <taxon>Pseudomonadati</taxon>
        <taxon>Pseudomonadota</taxon>
        <taxon>Gammaproteobacteria</taxon>
        <taxon>Alteromonadales</taxon>
        <taxon>Shewanellaceae</taxon>
        <taxon>Shewanella</taxon>
    </lineage>
</organism>
<evidence type="ECO:0000255" key="1">
    <source>
        <dbReference type="HAMAP-Rule" id="MF_00627"/>
    </source>
</evidence>
<sequence>MKALSKLKAEKGIWLVDAPKPVMGHNDLLIKIKKTAICGTDMHIYNWDEWSQKTIPVPMVVGHEYVGEVVDIGQEVRGFKIGDRVSGEGHITCGHCRNCRAGRTHLCRNTSGVGVNREGSFAEYLVIPAFNAFKIPDDISDDLASIFDPFGNAVHTALSFDLVGEDVLITGAGPIGIMAAAVCRHVGARHVVITDVNEYRLELARKMGATRAVNVSKESLKDVMKELGMTEGFDVGLEMSGVPSAFHAMLDTMNHGGKVAMLGIPGGEMAIDWSKVIFKGLVIKGIYGREMFETWYKMASLIQSGLDISPIITHHFKIDDFQQGFDAMGSGQSGKVILSWD</sequence>
<protein>
    <recommendedName>
        <fullName evidence="1">L-threonine 3-dehydrogenase</fullName>
        <shortName evidence="1">TDH</shortName>
        <ecNumber evidence="1">1.1.1.103</ecNumber>
    </recommendedName>
</protein>
<dbReference type="EC" id="1.1.1.103" evidence="1"/>
<dbReference type="EMBL" id="CP000891">
    <property type="protein sequence ID" value="ABX51638.1"/>
    <property type="molecule type" value="Genomic_DNA"/>
</dbReference>
<dbReference type="RefSeq" id="WP_006079369.1">
    <property type="nucleotide sequence ID" value="NC_009997.1"/>
</dbReference>
<dbReference type="SMR" id="A9KWY0"/>
<dbReference type="GeneID" id="11775065"/>
<dbReference type="KEGG" id="sbn:Sbal195_4481"/>
<dbReference type="HOGENOM" id="CLU_026673_11_0_6"/>
<dbReference type="UniPathway" id="UPA00046">
    <property type="reaction ID" value="UER00505"/>
</dbReference>
<dbReference type="Proteomes" id="UP000000770">
    <property type="component" value="Chromosome"/>
</dbReference>
<dbReference type="GO" id="GO:0005737">
    <property type="term" value="C:cytoplasm"/>
    <property type="evidence" value="ECO:0007669"/>
    <property type="project" value="UniProtKB-SubCell"/>
</dbReference>
<dbReference type="GO" id="GO:0008743">
    <property type="term" value="F:L-threonine 3-dehydrogenase activity"/>
    <property type="evidence" value="ECO:0007669"/>
    <property type="project" value="UniProtKB-UniRule"/>
</dbReference>
<dbReference type="GO" id="GO:0008270">
    <property type="term" value="F:zinc ion binding"/>
    <property type="evidence" value="ECO:0007669"/>
    <property type="project" value="UniProtKB-UniRule"/>
</dbReference>
<dbReference type="GO" id="GO:0019518">
    <property type="term" value="P:L-threonine catabolic process to glycine"/>
    <property type="evidence" value="ECO:0007669"/>
    <property type="project" value="UniProtKB-UniPathway"/>
</dbReference>
<dbReference type="Gene3D" id="3.90.180.10">
    <property type="entry name" value="Medium-chain alcohol dehydrogenases, catalytic domain"/>
    <property type="match status" value="1"/>
</dbReference>
<dbReference type="Gene3D" id="3.40.50.720">
    <property type="entry name" value="NAD(P)-binding Rossmann-like Domain"/>
    <property type="match status" value="1"/>
</dbReference>
<dbReference type="HAMAP" id="MF_00627">
    <property type="entry name" value="Thr_dehydrog"/>
    <property type="match status" value="1"/>
</dbReference>
<dbReference type="InterPro" id="IPR013149">
    <property type="entry name" value="ADH-like_C"/>
</dbReference>
<dbReference type="InterPro" id="IPR013154">
    <property type="entry name" value="ADH-like_N"/>
</dbReference>
<dbReference type="InterPro" id="IPR002328">
    <property type="entry name" value="ADH_Zn_CS"/>
</dbReference>
<dbReference type="InterPro" id="IPR011032">
    <property type="entry name" value="GroES-like_sf"/>
</dbReference>
<dbReference type="InterPro" id="IPR004627">
    <property type="entry name" value="L-Threonine_3-DHase"/>
</dbReference>
<dbReference type="InterPro" id="IPR036291">
    <property type="entry name" value="NAD(P)-bd_dom_sf"/>
</dbReference>
<dbReference type="InterPro" id="IPR020843">
    <property type="entry name" value="PKS_ER"/>
</dbReference>
<dbReference type="InterPro" id="IPR050129">
    <property type="entry name" value="Zn_alcohol_dh"/>
</dbReference>
<dbReference type="NCBIfam" id="NF003808">
    <property type="entry name" value="PRK05396.1"/>
    <property type="match status" value="1"/>
</dbReference>
<dbReference type="NCBIfam" id="TIGR00692">
    <property type="entry name" value="tdh"/>
    <property type="match status" value="1"/>
</dbReference>
<dbReference type="PANTHER" id="PTHR43401">
    <property type="entry name" value="L-THREONINE 3-DEHYDROGENASE"/>
    <property type="match status" value="1"/>
</dbReference>
<dbReference type="PANTHER" id="PTHR43401:SF2">
    <property type="entry name" value="L-THREONINE 3-DEHYDROGENASE"/>
    <property type="match status" value="1"/>
</dbReference>
<dbReference type="Pfam" id="PF08240">
    <property type="entry name" value="ADH_N"/>
    <property type="match status" value="1"/>
</dbReference>
<dbReference type="Pfam" id="PF00107">
    <property type="entry name" value="ADH_zinc_N"/>
    <property type="match status" value="1"/>
</dbReference>
<dbReference type="SMART" id="SM00829">
    <property type="entry name" value="PKS_ER"/>
    <property type="match status" value="1"/>
</dbReference>
<dbReference type="SUPFAM" id="SSF50129">
    <property type="entry name" value="GroES-like"/>
    <property type="match status" value="1"/>
</dbReference>
<dbReference type="SUPFAM" id="SSF51735">
    <property type="entry name" value="NAD(P)-binding Rossmann-fold domains"/>
    <property type="match status" value="1"/>
</dbReference>
<dbReference type="PROSITE" id="PS00059">
    <property type="entry name" value="ADH_ZINC"/>
    <property type="match status" value="1"/>
</dbReference>
<accession>A9KWY0</accession>
<gene>
    <name evidence="1" type="primary">tdh</name>
    <name type="ordered locus">Sbal195_4481</name>
</gene>
<feature type="chain" id="PRO_1000082615" description="L-threonine 3-dehydrogenase">
    <location>
        <begin position="1"/>
        <end position="341"/>
    </location>
</feature>
<feature type="active site" description="Charge relay system" evidence="1">
    <location>
        <position position="40"/>
    </location>
</feature>
<feature type="active site" description="Charge relay system" evidence="1">
    <location>
        <position position="43"/>
    </location>
</feature>
<feature type="binding site" evidence="1">
    <location>
        <position position="38"/>
    </location>
    <ligand>
        <name>Zn(2+)</name>
        <dbReference type="ChEBI" id="CHEBI:29105"/>
        <label>1</label>
        <note>catalytic</note>
    </ligand>
</feature>
<feature type="binding site" evidence="1">
    <location>
        <position position="63"/>
    </location>
    <ligand>
        <name>Zn(2+)</name>
        <dbReference type="ChEBI" id="CHEBI:29105"/>
        <label>1</label>
        <note>catalytic</note>
    </ligand>
</feature>
<feature type="binding site" evidence="1">
    <location>
        <position position="64"/>
    </location>
    <ligand>
        <name>Zn(2+)</name>
        <dbReference type="ChEBI" id="CHEBI:29105"/>
        <label>1</label>
        <note>catalytic</note>
    </ligand>
</feature>
<feature type="binding site" evidence="1">
    <location>
        <position position="93"/>
    </location>
    <ligand>
        <name>Zn(2+)</name>
        <dbReference type="ChEBI" id="CHEBI:29105"/>
        <label>2</label>
    </ligand>
</feature>
<feature type="binding site" evidence="1">
    <location>
        <position position="96"/>
    </location>
    <ligand>
        <name>Zn(2+)</name>
        <dbReference type="ChEBI" id="CHEBI:29105"/>
        <label>2</label>
    </ligand>
</feature>
<feature type="binding site" evidence="1">
    <location>
        <position position="99"/>
    </location>
    <ligand>
        <name>Zn(2+)</name>
        <dbReference type="ChEBI" id="CHEBI:29105"/>
        <label>2</label>
    </ligand>
</feature>
<feature type="binding site" evidence="1">
    <location>
        <position position="107"/>
    </location>
    <ligand>
        <name>Zn(2+)</name>
        <dbReference type="ChEBI" id="CHEBI:29105"/>
        <label>2</label>
    </ligand>
</feature>
<feature type="binding site" evidence="1">
    <location>
        <position position="175"/>
    </location>
    <ligand>
        <name>NAD(+)</name>
        <dbReference type="ChEBI" id="CHEBI:57540"/>
    </ligand>
</feature>
<feature type="binding site" evidence="1">
    <location>
        <position position="195"/>
    </location>
    <ligand>
        <name>NAD(+)</name>
        <dbReference type="ChEBI" id="CHEBI:57540"/>
    </ligand>
</feature>
<feature type="binding site" evidence="1">
    <location>
        <position position="200"/>
    </location>
    <ligand>
        <name>NAD(+)</name>
        <dbReference type="ChEBI" id="CHEBI:57540"/>
    </ligand>
</feature>
<feature type="binding site" evidence="1">
    <location>
        <begin position="262"/>
        <end position="264"/>
    </location>
    <ligand>
        <name>NAD(+)</name>
        <dbReference type="ChEBI" id="CHEBI:57540"/>
    </ligand>
</feature>
<feature type="binding site" evidence="1">
    <location>
        <begin position="286"/>
        <end position="287"/>
    </location>
    <ligand>
        <name>NAD(+)</name>
        <dbReference type="ChEBI" id="CHEBI:57540"/>
    </ligand>
</feature>
<feature type="site" description="Important for catalytic activity for the proton relay mechanism but does not participate directly in the coordination of zinc atom" evidence="1">
    <location>
        <position position="148"/>
    </location>
</feature>
<reference key="1">
    <citation type="submission" date="2007-11" db="EMBL/GenBank/DDBJ databases">
        <title>Complete sequence of chromosome of Shewanella baltica OS195.</title>
        <authorList>
            <consortium name="US DOE Joint Genome Institute"/>
            <person name="Copeland A."/>
            <person name="Lucas S."/>
            <person name="Lapidus A."/>
            <person name="Barry K."/>
            <person name="Glavina del Rio T."/>
            <person name="Dalin E."/>
            <person name="Tice H."/>
            <person name="Pitluck S."/>
            <person name="Chain P."/>
            <person name="Malfatti S."/>
            <person name="Shin M."/>
            <person name="Vergez L."/>
            <person name="Schmutz J."/>
            <person name="Larimer F."/>
            <person name="Land M."/>
            <person name="Hauser L."/>
            <person name="Kyrpides N."/>
            <person name="Kim E."/>
            <person name="Brettar I."/>
            <person name="Rodrigues J."/>
            <person name="Konstantinidis K."/>
            <person name="Klappenbach J."/>
            <person name="Hofle M."/>
            <person name="Tiedje J."/>
            <person name="Richardson P."/>
        </authorList>
    </citation>
    <scope>NUCLEOTIDE SEQUENCE [LARGE SCALE GENOMIC DNA]</scope>
    <source>
        <strain>OS195</strain>
    </source>
</reference>
<comment type="function">
    <text evidence="1">Catalyzes the NAD(+)-dependent oxidation of L-threonine to 2-amino-3-ketobutyrate.</text>
</comment>
<comment type="catalytic activity">
    <reaction evidence="1">
        <text>L-threonine + NAD(+) = (2S)-2-amino-3-oxobutanoate + NADH + H(+)</text>
        <dbReference type="Rhea" id="RHEA:13161"/>
        <dbReference type="ChEBI" id="CHEBI:15378"/>
        <dbReference type="ChEBI" id="CHEBI:57540"/>
        <dbReference type="ChEBI" id="CHEBI:57926"/>
        <dbReference type="ChEBI" id="CHEBI:57945"/>
        <dbReference type="ChEBI" id="CHEBI:78948"/>
        <dbReference type="EC" id="1.1.1.103"/>
    </reaction>
</comment>
<comment type="cofactor">
    <cofactor evidence="1">
        <name>Zn(2+)</name>
        <dbReference type="ChEBI" id="CHEBI:29105"/>
    </cofactor>
    <text evidence="1">Binds 2 Zn(2+) ions per subunit.</text>
</comment>
<comment type="pathway">
    <text evidence="1">Amino-acid degradation; L-threonine degradation via oxydo-reductase pathway; glycine from L-threonine: step 1/2.</text>
</comment>
<comment type="subunit">
    <text evidence="1">Homotetramer.</text>
</comment>
<comment type="subcellular location">
    <subcellularLocation>
        <location evidence="1">Cytoplasm</location>
    </subcellularLocation>
</comment>
<comment type="similarity">
    <text evidence="1">Belongs to the zinc-containing alcohol dehydrogenase family.</text>
</comment>